<evidence type="ECO:0000255" key="1">
    <source>
        <dbReference type="HAMAP-Rule" id="MF_01804"/>
    </source>
</evidence>
<protein>
    <recommendedName>
        <fullName evidence="1">Segregation and condensation protein B</fullName>
    </recommendedName>
</protein>
<name>SCPB_STRT1</name>
<dbReference type="EMBL" id="CP000024">
    <property type="protein sequence ID" value="AAV61874.1"/>
    <property type="molecule type" value="Genomic_DNA"/>
</dbReference>
<dbReference type="RefSeq" id="WP_011226852.1">
    <property type="nucleotide sequence ID" value="NC_006449.1"/>
</dbReference>
<dbReference type="SMR" id="Q5M1H9"/>
<dbReference type="KEGG" id="stc:str0261"/>
<dbReference type="HOGENOM" id="CLU_045647_5_3_9"/>
<dbReference type="GO" id="GO:0005737">
    <property type="term" value="C:cytoplasm"/>
    <property type="evidence" value="ECO:0007669"/>
    <property type="project" value="UniProtKB-SubCell"/>
</dbReference>
<dbReference type="GO" id="GO:0051301">
    <property type="term" value="P:cell division"/>
    <property type="evidence" value="ECO:0007669"/>
    <property type="project" value="UniProtKB-KW"/>
</dbReference>
<dbReference type="GO" id="GO:0051304">
    <property type="term" value="P:chromosome separation"/>
    <property type="evidence" value="ECO:0007669"/>
    <property type="project" value="InterPro"/>
</dbReference>
<dbReference type="GO" id="GO:0006260">
    <property type="term" value="P:DNA replication"/>
    <property type="evidence" value="ECO:0007669"/>
    <property type="project" value="UniProtKB-UniRule"/>
</dbReference>
<dbReference type="Gene3D" id="1.10.10.10">
    <property type="entry name" value="Winged helix-like DNA-binding domain superfamily/Winged helix DNA-binding domain"/>
    <property type="match status" value="2"/>
</dbReference>
<dbReference type="HAMAP" id="MF_01804">
    <property type="entry name" value="ScpB"/>
    <property type="match status" value="1"/>
</dbReference>
<dbReference type="InterPro" id="IPR005234">
    <property type="entry name" value="ScpB_csome_segregation"/>
</dbReference>
<dbReference type="InterPro" id="IPR036388">
    <property type="entry name" value="WH-like_DNA-bd_sf"/>
</dbReference>
<dbReference type="InterPro" id="IPR036390">
    <property type="entry name" value="WH_DNA-bd_sf"/>
</dbReference>
<dbReference type="NCBIfam" id="TIGR00281">
    <property type="entry name" value="SMC-Scp complex subunit ScpB"/>
    <property type="match status" value="1"/>
</dbReference>
<dbReference type="PANTHER" id="PTHR34298">
    <property type="entry name" value="SEGREGATION AND CONDENSATION PROTEIN B"/>
    <property type="match status" value="1"/>
</dbReference>
<dbReference type="PANTHER" id="PTHR34298:SF2">
    <property type="entry name" value="SEGREGATION AND CONDENSATION PROTEIN B"/>
    <property type="match status" value="1"/>
</dbReference>
<dbReference type="Pfam" id="PF04079">
    <property type="entry name" value="SMC_ScpB"/>
    <property type="match status" value="1"/>
</dbReference>
<dbReference type="PIRSF" id="PIRSF019345">
    <property type="entry name" value="ScpB"/>
    <property type="match status" value="1"/>
</dbReference>
<dbReference type="SUPFAM" id="SSF46785">
    <property type="entry name" value="Winged helix' DNA-binding domain"/>
    <property type="match status" value="2"/>
</dbReference>
<feature type="chain" id="PRO_0000273315" description="Segregation and condensation protein B">
    <location>
        <begin position="1"/>
        <end position="193"/>
    </location>
</feature>
<comment type="function">
    <text evidence="1">Participates in chromosomal partition during cell division. May act via the formation of a condensin-like complex containing Smc and ScpA that pull DNA away from mid-cell into both cell halves.</text>
</comment>
<comment type="subunit">
    <text evidence="1">Homodimer. Homodimerization may be required to stabilize the binding of ScpA to the Smc head domains. Component of a cohesin-like complex composed of ScpA, ScpB and the Smc homodimer, in which ScpA and ScpB bind to the head domain of Smc. The presence of the three proteins is required for the association of the complex with DNA.</text>
</comment>
<comment type="subcellular location">
    <subcellularLocation>
        <location evidence="1">Cytoplasm</location>
    </subcellularLocation>
    <text evidence="1">Associated with two foci at the outer edges of the nucleoid region in young cells, and at four foci within both cell halves in older cells.</text>
</comment>
<comment type="similarity">
    <text evidence="1">Belongs to the ScpB family.</text>
</comment>
<organism>
    <name type="scientific">Streptococcus thermophilus (strain CNRZ 1066)</name>
    <dbReference type="NCBI Taxonomy" id="299768"/>
    <lineage>
        <taxon>Bacteria</taxon>
        <taxon>Bacillati</taxon>
        <taxon>Bacillota</taxon>
        <taxon>Bacilli</taxon>
        <taxon>Lactobacillales</taxon>
        <taxon>Streptococcaceae</taxon>
        <taxon>Streptococcus</taxon>
    </lineage>
</organism>
<gene>
    <name evidence="1" type="primary">scpB</name>
    <name type="ordered locus">str0261</name>
</gene>
<sequence>MSSHLARLEALLFVAGEDGLSLRTMAQLLEIPVTGLTQSLEKLQAKYKADEDTALCLLESSNTYKIVTKPDFACLLRDYSKTPINQSLSRASLEVLSIVAYKQPITRAEVDDIRGVNSSGAIAKLQAFGLIREAGKKDAVGRPNLYATTDYFLDYIGINSLDELVAIDQLELEEQETSLFREDAPEDLEDLDN</sequence>
<proteinExistence type="inferred from homology"/>
<reference key="1">
    <citation type="journal article" date="2004" name="Nat. Biotechnol.">
        <title>Complete sequence and comparative genome analysis of the dairy bacterium Streptococcus thermophilus.</title>
        <authorList>
            <person name="Bolotin A."/>
            <person name="Quinquis B."/>
            <person name="Renault P."/>
            <person name="Sorokin A."/>
            <person name="Ehrlich S.D."/>
            <person name="Kulakauskas S."/>
            <person name="Lapidus A."/>
            <person name="Goltsman E."/>
            <person name="Mazur M."/>
            <person name="Pusch G.D."/>
            <person name="Fonstein M."/>
            <person name="Overbeek R."/>
            <person name="Kyprides N."/>
            <person name="Purnelle B."/>
            <person name="Prozzi D."/>
            <person name="Ngui K."/>
            <person name="Masuy D."/>
            <person name="Hancy F."/>
            <person name="Burteau S."/>
            <person name="Boutry M."/>
            <person name="Delcour J."/>
            <person name="Goffeau A."/>
            <person name="Hols P."/>
        </authorList>
    </citation>
    <scope>NUCLEOTIDE SEQUENCE [LARGE SCALE GENOMIC DNA]</scope>
    <source>
        <strain>CNRZ 1066</strain>
    </source>
</reference>
<keyword id="KW-0131">Cell cycle</keyword>
<keyword id="KW-0132">Cell division</keyword>
<keyword id="KW-0159">Chromosome partition</keyword>
<keyword id="KW-0963">Cytoplasm</keyword>
<accession>Q5M1H9</accession>